<sequence>MSSGAVLTSQEYITHHLSNLKVGEGFWAVHLDSLGWSVFLGLVFLTIFRSVAKKATSGVPGKLQCAVEMVVGFVDDSVKSTFHGKNALIAPLSLTIFVWILLMNSMDWVPVDLLPHLIHWVTGMPLGDIYMKPVPTADPNITFGLALGVFILIIYYSIKVKGVGGFMKELTTQPFGHWSLYPVNFILETVTMLARPLSLALRLFGNLYAGELIFLLIATIGVFQLPVHFLWAAFHLLVIPLQAFIFMMLTIVYLSLAHEDH</sequence>
<protein>
    <recommendedName>
        <fullName evidence="1">ATP synthase subunit a</fullName>
    </recommendedName>
    <alternativeName>
        <fullName evidence="1">ATP synthase F0 sector subunit a</fullName>
    </alternativeName>
    <alternativeName>
        <fullName evidence="1">F-ATPase subunit 6</fullName>
    </alternativeName>
</protein>
<feature type="chain" id="PRO_0000362276" description="ATP synthase subunit a">
    <location>
        <begin position="1"/>
        <end position="261"/>
    </location>
</feature>
<feature type="transmembrane region" description="Helical" evidence="1">
    <location>
        <begin position="28"/>
        <end position="48"/>
    </location>
</feature>
<feature type="transmembrane region" description="Helical" evidence="1">
    <location>
        <begin position="89"/>
        <end position="109"/>
    </location>
</feature>
<feature type="transmembrane region" description="Helical" evidence="1">
    <location>
        <begin position="140"/>
        <end position="160"/>
    </location>
</feature>
<feature type="transmembrane region" description="Helical" evidence="1">
    <location>
        <begin position="203"/>
        <end position="223"/>
    </location>
</feature>
<feature type="transmembrane region" description="Helical" evidence="1">
    <location>
        <begin position="229"/>
        <end position="249"/>
    </location>
</feature>
<comment type="function">
    <text evidence="1">Key component of the proton channel; it plays a direct role in the translocation of protons across the membrane.</text>
</comment>
<comment type="subunit">
    <text evidence="1">F-type ATPases have 2 components, CF(1) - the catalytic core - and CF(0) - the membrane proton channel. CF(1) has five subunits: alpha(3), beta(3), gamma(1), delta(1), epsilon(1). CF(0) has three main subunits: a(1), b(2) and c(9-12). The alpha and beta chains form an alternating ring which encloses part of the gamma chain. CF(1) is attached to CF(0) by a central stalk formed by the gamma and epsilon chains, while a peripheral stalk is formed by the delta and b chains.</text>
</comment>
<comment type="subcellular location">
    <subcellularLocation>
        <location evidence="1">Cell inner membrane</location>
        <topology evidence="1">Multi-pass membrane protein</topology>
    </subcellularLocation>
</comment>
<comment type="similarity">
    <text evidence="1">Belongs to the ATPase A chain family.</text>
</comment>
<accession>Q48AW6</accession>
<evidence type="ECO:0000255" key="1">
    <source>
        <dbReference type="HAMAP-Rule" id="MF_01393"/>
    </source>
</evidence>
<proteinExistence type="inferred from homology"/>
<organism>
    <name type="scientific">Colwellia psychrerythraea (strain 34H / ATCC BAA-681)</name>
    <name type="common">Vibrio psychroerythus</name>
    <dbReference type="NCBI Taxonomy" id="167879"/>
    <lineage>
        <taxon>Bacteria</taxon>
        <taxon>Pseudomonadati</taxon>
        <taxon>Pseudomonadota</taxon>
        <taxon>Gammaproteobacteria</taxon>
        <taxon>Alteromonadales</taxon>
        <taxon>Colwelliaceae</taxon>
        <taxon>Colwellia</taxon>
    </lineage>
</organism>
<dbReference type="EMBL" id="CP000083">
    <property type="protein sequence ID" value="AAZ25166.1"/>
    <property type="molecule type" value="Genomic_DNA"/>
</dbReference>
<dbReference type="SMR" id="Q48AW6"/>
<dbReference type="STRING" id="167879.CPS_0056"/>
<dbReference type="KEGG" id="cps:CPS_0056"/>
<dbReference type="eggNOG" id="COG0356">
    <property type="taxonomic scope" value="Bacteria"/>
</dbReference>
<dbReference type="HOGENOM" id="CLU_041018_1_0_6"/>
<dbReference type="Proteomes" id="UP000000547">
    <property type="component" value="Chromosome"/>
</dbReference>
<dbReference type="GO" id="GO:0005886">
    <property type="term" value="C:plasma membrane"/>
    <property type="evidence" value="ECO:0007669"/>
    <property type="project" value="UniProtKB-SubCell"/>
</dbReference>
<dbReference type="GO" id="GO:0045259">
    <property type="term" value="C:proton-transporting ATP synthase complex"/>
    <property type="evidence" value="ECO:0007669"/>
    <property type="project" value="UniProtKB-KW"/>
</dbReference>
<dbReference type="GO" id="GO:0046933">
    <property type="term" value="F:proton-transporting ATP synthase activity, rotational mechanism"/>
    <property type="evidence" value="ECO:0007669"/>
    <property type="project" value="UniProtKB-UniRule"/>
</dbReference>
<dbReference type="GO" id="GO:0042777">
    <property type="term" value="P:proton motive force-driven plasma membrane ATP synthesis"/>
    <property type="evidence" value="ECO:0007669"/>
    <property type="project" value="TreeGrafter"/>
</dbReference>
<dbReference type="CDD" id="cd00310">
    <property type="entry name" value="ATP-synt_Fo_a_6"/>
    <property type="match status" value="1"/>
</dbReference>
<dbReference type="FunFam" id="1.20.120.220:FF:000002">
    <property type="entry name" value="ATP synthase subunit a"/>
    <property type="match status" value="1"/>
</dbReference>
<dbReference type="Gene3D" id="1.20.120.220">
    <property type="entry name" value="ATP synthase, F0 complex, subunit A"/>
    <property type="match status" value="1"/>
</dbReference>
<dbReference type="HAMAP" id="MF_01393">
    <property type="entry name" value="ATP_synth_a_bact"/>
    <property type="match status" value="1"/>
</dbReference>
<dbReference type="InterPro" id="IPR045082">
    <property type="entry name" value="ATP_syn_F0_a_bact/chloroplast"/>
</dbReference>
<dbReference type="InterPro" id="IPR000568">
    <property type="entry name" value="ATP_synth_F0_asu"/>
</dbReference>
<dbReference type="InterPro" id="IPR023011">
    <property type="entry name" value="ATP_synth_F0_asu_AS"/>
</dbReference>
<dbReference type="InterPro" id="IPR035908">
    <property type="entry name" value="F0_ATP_A_sf"/>
</dbReference>
<dbReference type="NCBIfam" id="TIGR01131">
    <property type="entry name" value="ATP_synt_6_or_A"/>
    <property type="match status" value="1"/>
</dbReference>
<dbReference type="NCBIfam" id="NF004477">
    <property type="entry name" value="PRK05815.1-1"/>
    <property type="match status" value="1"/>
</dbReference>
<dbReference type="PANTHER" id="PTHR42823">
    <property type="entry name" value="ATP SYNTHASE SUBUNIT A, CHLOROPLASTIC"/>
    <property type="match status" value="1"/>
</dbReference>
<dbReference type="PANTHER" id="PTHR42823:SF3">
    <property type="entry name" value="ATP SYNTHASE SUBUNIT A, CHLOROPLASTIC"/>
    <property type="match status" value="1"/>
</dbReference>
<dbReference type="Pfam" id="PF00119">
    <property type="entry name" value="ATP-synt_A"/>
    <property type="match status" value="1"/>
</dbReference>
<dbReference type="SUPFAM" id="SSF81336">
    <property type="entry name" value="F1F0 ATP synthase subunit A"/>
    <property type="match status" value="1"/>
</dbReference>
<dbReference type="PROSITE" id="PS00449">
    <property type="entry name" value="ATPASE_A"/>
    <property type="match status" value="1"/>
</dbReference>
<reference key="1">
    <citation type="journal article" date="2005" name="Proc. Natl. Acad. Sci. U.S.A.">
        <title>The psychrophilic lifestyle as revealed by the genome sequence of Colwellia psychrerythraea 34H through genomic and proteomic analyses.</title>
        <authorList>
            <person name="Methe B.A."/>
            <person name="Nelson K.E."/>
            <person name="Deming J.W."/>
            <person name="Momen B."/>
            <person name="Melamud E."/>
            <person name="Zhang X."/>
            <person name="Moult J."/>
            <person name="Madupu R."/>
            <person name="Nelson W.C."/>
            <person name="Dodson R.J."/>
            <person name="Brinkac L.M."/>
            <person name="Daugherty S.C."/>
            <person name="Durkin A.S."/>
            <person name="DeBoy R.T."/>
            <person name="Kolonay J.F."/>
            <person name="Sullivan S.A."/>
            <person name="Zhou L."/>
            <person name="Davidsen T.M."/>
            <person name="Wu M."/>
            <person name="Huston A.L."/>
            <person name="Lewis M."/>
            <person name="Weaver B."/>
            <person name="Weidman J.F."/>
            <person name="Khouri H."/>
            <person name="Utterback T.R."/>
            <person name="Feldblyum T.V."/>
            <person name="Fraser C.M."/>
        </authorList>
    </citation>
    <scope>NUCLEOTIDE SEQUENCE [LARGE SCALE GENOMIC DNA]</scope>
    <source>
        <strain>34H / ATCC BAA-681</strain>
    </source>
</reference>
<keyword id="KW-0066">ATP synthesis</keyword>
<keyword id="KW-0997">Cell inner membrane</keyword>
<keyword id="KW-1003">Cell membrane</keyword>
<keyword id="KW-0138">CF(0)</keyword>
<keyword id="KW-0375">Hydrogen ion transport</keyword>
<keyword id="KW-0406">Ion transport</keyword>
<keyword id="KW-0472">Membrane</keyword>
<keyword id="KW-0812">Transmembrane</keyword>
<keyword id="KW-1133">Transmembrane helix</keyword>
<keyword id="KW-0813">Transport</keyword>
<gene>
    <name evidence="1" type="primary">atpB</name>
    <name type="ordered locus">CPS_0056</name>
</gene>
<name>ATP6_COLP3</name>